<keyword id="KW-0963">Cytoplasm</keyword>
<keyword id="KW-0648">Protein biosynthesis</keyword>
<keyword id="KW-1185">Reference proteome</keyword>
<feature type="chain" id="PRO_0000167442" description="Ribosome-recycling factor">
    <location>
        <begin position="1"/>
        <end position="179"/>
    </location>
</feature>
<dbReference type="EMBL" id="AE001273">
    <property type="protein sequence ID" value="AAC68272.1"/>
    <property type="molecule type" value="Genomic_DNA"/>
</dbReference>
<dbReference type="PIR" id="D71484">
    <property type="entry name" value="D71484"/>
</dbReference>
<dbReference type="RefSeq" id="NP_220196.1">
    <property type="nucleotide sequence ID" value="NC_000117.1"/>
</dbReference>
<dbReference type="RefSeq" id="WP_009872050.1">
    <property type="nucleotide sequence ID" value="NC_000117.1"/>
</dbReference>
<dbReference type="SMR" id="O84684"/>
<dbReference type="FunCoup" id="O84684">
    <property type="interactions" value="286"/>
</dbReference>
<dbReference type="STRING" id="272561.CT_677"/>
<dbReference type="EnsemblBacteria" id="AAC68272">
    <property type="protein sequence ID" value="AAC68272"/>
    <property type="gene ID" value="CT_677"/>
</dbReference>
<dbReference type="GeneID" id="884466"/>
<dbReference type="KEGG" id="ctr:CT_677"/>
<dbReference type="PATRIC" id="fig|272561.5.peg.744"/>
<dbReference type="HOGENOM" id="CLU_073981_2_1_0"/>
<dbReference type="InParanoid" id="O84684"/>
<dbReference type="OrthoDB" id="9804006at2"/>
<dbReference type="Proteomes" id="UP000000431">
    <property type="component" value="Chromosome"/>
</dbReference>
<dbReference type="GO" id="GO:0005737">
    <property type="term" value="C:cytoplasm"/>
    <property type="evidence" value="ECO:0007669"/>
    <property type="project" value="UniProtKB-SubCell"/>
</dbReference>
<dbReference type="GO" id="GO:0043023">
    <property type="term" value="F:ribosomal large subunit binding"/>
    <property type="evidence" value="ECO:0000318"/>
    <property type="project" value="GO_Central"/>
</dbReference>
<dbReference type="GO" id="GO:0006412">
    <property type="term" value="P:translation"/>
    <property type="evidence" value="ECO:0000318"/>
    <property type="project" value="GO_Central"/>
</dbReference>
<dbReference type="GO" id="GO:0006415">
    <property type="term" value="P:translational termination"/>
    <property type="evidence" value="ECO:0007669"/>
    <property type="project" value="UniProtKB-UniRule"/>
</dbReference>
<dbReference type="CDD" id="cd00520">
    <property type="entry name" value="RRF"/>
    <property type="match status" value="1"/>
</dbReference>
<dbReference type="FunFam" id="1.10.132.20:FF:000001">
    <property type="entry name" value="Ribosome-recycling factor"/>
    <property type="match status" value="1"/>
</dbReference>
<dbReference type="FunFam" id="3.30.1360.40:FF:000001">
    <property type="entry name" value="Ribosome-recycling factor"/>
    <property type="match status" value="1"/>
</dbReference>
<dbReference type="Gene3D" id="3.30.1360.40">
    <property type="match status" value="1"/>
</dbReference>
<dbReference type="Gene3D" id="1.10.132.20">
    <property type="entry name" value="Ribosome-recycling factor"/>
    <property type="match status" value="1"/>
</dbReference>
<dbReference type="HAMAP" id="MF_00040">
    <property type="entry name" value="RRF"/>
    <property type="match status" value="1"/>
</dbReference>
<dbReference type="InterPro" id="IPR002661">
    <property type="entry name" value="Ribosome_recyc_fac"/>
</dbReference>
<dbReference type="InterPro" id="IPR023584">
    <property type="entry name" value="Ribosome_recyc_fac_dom"/>
</dbReference>
<dbReference type="InterPro" id="IPR036191">
    <property type="entry name" value="RRF_sf"/>
</dbReference>
<dbReference type="NCBIfam" id="TIGR00496">
    <property type="entry name" value="frr"/>
    <property type="match status" value="1"/>
</dbReference>
<dbReference type="PANTHER" id="PTHR20982:SF3">
    <property type="entry name" value="MITOCHONDRIAL RIBOSOME RECYCLING FACTOR PSEUDO 1"/>
    <property type="match status" value="1"/>
</dbReference>
<dbReference type="PANTHER" id="PTHR20982">
    <property type="entry name" value="RIBOSOME RECYCLING FACTOR"/>
    <property type="match status" value="1"/>
</dbReference>
<dbReference type="Pfam" id="PF01765">
    <property type="entry name" value="RRF"/>
    <property type="match status" value="1"/>
</dbReference>
<dbReference type="SUPFAM" id="SSF55194">
    <property type="entry name" value="Ribosome recycling factor, RRF"/>
    <property type="match status" value="1"/>
</dbReference>
<organism>
    <name type="scientific">Chlamydia trachomatis serovar D (strain ATCC VR-885 / DSM 19411 / UW-3/Cx)</name>
    <dbReference type="NCBI Taxonomy" id="272561"/>
    <lineage>
        <taxon>Bacteria</taxon>
        <taxon>Pseudomonadati</taxon>
        <taxon>Chlamydiota</taxon>
        <taxon>Chlamydiia</taxon>
        <taxon>Chlamydiales</taxon>
        <taxon>Chlamydiaceae</taxon>
        <taxon>Chlamydia/Chlamydophila group</taxon>
        <taxon>Chlamydia</taxon>
    </lineage>
</organism>
<proteinExistence type="inferred from homology"/>
<comment type="function">
    <text evidence="1">Responsible for the release of ribosomes from messenger RNA at the termination of protein biosynthesis. May increase the efficiency of translation by recycling ribosomes from one round of translation to another.</text>
</comment>
<comment type="subcellular location">
    <subcellularLocation>
        <location evidence="1">Cytoplasm</location>
    </subcellularLocation>
</comment>
<comment type="similarity">
    <text evidence="1">Belongs to the RRF family.</text>
</comment>
<reference key="1">
    <citation type="journal article" date="1998" name="Science">
        <title>Genome sequence of an obligate intracellular pathogen of humans: Chlamydia trachomatis.</title>
        <authorList>
            <person name="Stephens R.S."/>
            <person name="Kalman S."/>
            <person name="Lammel C.J."/>
            <person name="Fan J."/>
            <person name="Marathe R."/>
            <person name="Aravind L."/>
            <person name="Mitchell W.P."/>
            <person name="Olinger L."/>
            <person name="Tatusov R.L."/>
            <person name="Zhao Q."/>
            <person name="Koonin E.V."/>
            <person name="Davis R.W."/>
        </authorList>
    </citation>
    <scope>NUCLEOTIDE SEQUENCE [LARGE SCALE GENOMIC DNA]</scope>
    <source>
        <strain>ATCC VR-885 / DSM 19411 / UW-3/Cx</strain>
    </source>
</reference>
<name>RRF_CHLTR</name>
<sequence length="179" mass="20082">MTLASAEKEMVGVLTFFQKETRGFRTGKAHPALVETVTVEVYGTTMRLSDIASISVSDMRQLLLSPYDAGTVSAISKGILAANLNLQPIVEGATVRINVPEPTEEYRREVIKQLKRKSEEAKVAIRNIRRTFNDRLKKDDNLTEDAVKSLEKKIQELTDKFCKQIEELAKQKEAELATV</sequence>
<protein>
    <recommendedName>
        <fullName evidence="1">Ribosome-recycling factor</fullName>
        <shortName evidence="1">RRF</shortName>
    </recommendedName>
    <alternativeName>
        <fullName evidence="1">Ribosome-releasing factor</fullName>
    </alternativeName>
</protein>
<accession>O84684</accession>
<gene>
    <name evidence="1" type="primary">frr</name>
    <name type="synonym">rrf</name>
    <name type="ordered locus">CT_677</name>
</gene>
<evidence type="ECO:0000255" key="1">
    <source>
        <dbReference type="HAMAP-Rule" id="MF_00040"/>
    </source>
</evidence>